<accession>Q2GUU0</accession>
<organism>
    <name type="scientific">Chaetomium globosum (strain ATCC 6205 / CBS 148.51 / DSM 1962 / NBRC 6347 / NRRL 1970)</name>
    <name type="common">Soil fungus</name>
    <dbReference type="NCBI Taxonomy" id="306901"/>
    <lineage>
        <taxon>Eukaryota</taxon>
        <taxon>Fungi</taxon>
        <taxon>Dikarya</taxon>
        <taxon>Ascomycota</taxon>
        <taxon>Pezizomycotina</taxon>
        <taxon>Sordariomycetes</taxon>
        <taxon>Sordariomycetidae</taxon>
        <taxon>Sordariales</taxon>
        <taxon>Chaetomiaceae</taxon>
        <taxon>Chaetomium</taxon>
    </lineage>
</organism>
<dbReference type="EMBL" id="CH408033">
    <property type="protein sequence ID" value="EAQ87011.1"/>
    <property type="molecule type" value="Genomic_DNA"/>
</dbReference>
<dbReference type="RefSeq" id="XP_001225920.1">
    <property type="nucleotide sequence ID" value="XM_001225919.1"/>
</dbReference>
<dbReference type="FunCoup" id="Q2GUU0">
    <property type="interactions" value="100"/>
</dbReference>
<dbReference type="GeneID" id="4393342"/>
<dbReference type="VEuPathDB" id="FungiDB:CHGG_08264"/>
<dbReference type="eggNOG" id="ENOG502QS0P">
    <property type="taxonomic scope" value="Eukaryota"/>
</dbReference>
<dbReference type="HOGENOM" id="CLU_007861_1_0_1"/>
<dbReference type="InParanoid" id="Q2GUU0"/>
<dbReference type="OMA" id="WTPEQAW"/>
<dbReference type="OrthoDB" id="10267654at2759"/>
<dbReference type="Proteomes" id="UP000001056">
    <property type="component" value="Unassembled WGS sequence"/>
</dbReference>
<dbReference type="GO" id="GO:0005743">
    <property type="term" value="C:mitochondrial inner membrane"/>
    <property type="evidence" value="ECO:0007669"/>
    <property type="project" value="UniProtKB-SubCell"/>
</dbReference>
<dbReference type="GO" id="GO:0003723">
    <property type="term" value="F:RNA binding"/>
    <property type="evidence" value="ECO:0007669"/>
    <property type="project" value="UniProtKB-KW"/>
</dbReference>
<dbReference type="GO" id="GO:0000002">
    <property type="term" value="P:mitochondrial genome maintenance"/>
    <property type="evidence" value="ECO:0007669"/>
    <property type="project" value="InterPro"/>
</dbReference>
<dbReference type="GO" id="GO:0006397">
    <property type="term" value="P:mRNA processing"/>
    <property type="evidence" value="ECO:0007669"/>
    <property type="project" value="UniProtKB-KW"/>
</dbReference>
<dbReference type="CDD" id="cd12433">
    <property type="entry name" value="RRM_Yme2p_like"/>
    <property type="match status" value="1"/>
</dbReference>
<dbReference type="FunFam" id="3.30.70.330:FF:000959">
    <property type="entry name" value="Mitochondrial escape protein 2"/>
    <property type="match status" value="1"/>
</dbReference>
<dbReference type="Gene3D" id="3.30.70.330">
    <property type="match status" value="1"/>
</dbReference>
<dbReference type="InterPro" id="IPR018850">
    <property type="entry name" value="Mt_escape_2_C"/>
</dbReference>
<dbReference type="InterPro" id="IPR012677">
    <property type="entry name" value="Nucleotide-bd_a/b_plait_sf"/>
</dbReference>
<dbReference type="InterPro" id="IPR035979">
    <property type="entry name" value="RBD_domain_sf"/>
</dbReference>
<dbReference type="InterPro" id="IPR000504">
    <property type="entry name" value="RRM_dom"/>
</dbReference>
<dbReference type="InterPro" id="IPR039627">
    <property type="entry name" value="Yme2_C"/>
</dbReference>
<dbReference type="InterPro" id="IPR034260">
    <property type="entry name" value="Yme2_RRM"/>
</dbReference>
<dbReference type="PANTHER" id="PTHR32198">
    <property type="entry name" value="MITOCHONDRIAL ESCAPE PROTEIN 2"/>
    <property type="match status" value="1"/>
</dbReference>
<dbReference type="PANTHER" id="PTHR32198:SF2">
    <property type="entry name" value="MITOCHONDRIAL ESCAPE PROTEIN 2"/>
    <property type="match status" value="1"/>
</dbReference>
<dbReference type="Pfam" id="PF10443">
    <property type="entry name" value="RNA12"/>
    <property type="match status" value="1"/>
</dbReference>
<dbReference type="Pfam" id="PF00076">
    <property type="entry name" value="RRM_1"/>
    <property type="match status" value="1"/>
</dbReference>
<dbReference type="SUPFAM" id="SSF54928">
    <property type="entry name" value="RNA-binding domain, RBD"/>
    <property type="match status" value="1"/>
</dbReference>
<dbReference type="PROSITE" id="PS50102">
    <property type="entry name" value="RRM"/>
    <property type="match status" value="1"/>
</dbReference>
<feature type="transit peptide" description="Mitochondrion" evidence="2">
    <location>
        <begin position="1"/>
        <end position="48"/>
    </location>
</feature>
<feature type="chain" id="PRO_0000343119" description="Mitochondrial escape protein 2">
    <location>
        <begin position="49"/>
        <end position="831"/>
    </location>
</feature>
<feature type="topological domain" description="Mitochondrial matrix" evidence="2">
    <location>
        <begin position="49"/>
        <end position="301"/>
    </location>
</feature>
<feature type="transmembrane region" description="Helical" evidence="2">
    <location>
        <begin position="302"/>
        <end position="322"/>
    </location>
</feature>
<feature type="topological domain" description="Mitochondrial intermembrane" evidence="2">
    <location>
        <begin position="323"/>
        <end position="831"/>
    </location>
</feature>
<feature type="domain" description="RRM" evidence="3">
    <location>
        <begin position="196"/>
        <end position="286"/>
    </location>
</feature>
<evidence type="ECO:0000250" key="1"/>
<evidence type="ECO:0000255" key="2"/>
<evidence type="ECO:0000255" key="3">
    <source>
        <dbReference type="PROSITE-ProRule" id="PRU00176"/>
    </source>
</evidence>
<evidence type="ECO:0000305" key="4"/>
<keyword id="KW-0472">Membrane</keyword>
<keyword id="KW-0496">Mitochondrion</keyword>
<keyword id="KW-0999">Mitochondrion inner membrane</keyword>
<keyword id="KW-0507">mRNA processing</keyword>
<keyword id="KW-1185">Reference proteome</keyword>
<keyword id="KW-0694">RNA-binding</keyword>
<keyword id="KW-0809">Transit peptide</keyword>
<keyword id="KW-0812">Transmembrane</keyword>
<keyword id="KW-1133">Transmembrane helix</keyword>
<sequence length="831" mass="92715">MISGRVLYRPAGRRGVGPLPLAATTYALRRRSPSITALGQPRRLIRRWESTSGAVGSDNSGHIDTQPNESILFFDNIFPLKLSSVLLWRAWETNELLRRFNSASLSFLDPIGLVKRAIPESAPIKVTEIIPRLKEGGAYVKFTYPDSISPADIEDQLVKYHEKTPIKPWFNPFRTIKSRLVLGRPWLEDLYRLPKSRLKIEFVPAKNSEPPTELSQESLYSLFRRYGKISDITSQAPDSKVLPKFAYVDFVLVRDAILARNCIHGFVLQEEGSKSLTRLRLSYEQRVKAHHIWNWVTGHPRIVIPVIAAFLAAFTVAVFDPIREFFVKRQTSDILAFRKRGDDDAGLSALFTHRKDLIDSIQNNLLETVGTFIVVQGPRGSGGRELVMDQVLEGRRDVLVVDCRQVVEARGEAGTIRKLANQVGYRPVFSWANNLSSMVDLAIQSTTGVKAGFSENLESQVTKILQTTAEALKDVSLARRKRDKDANLTDDAYLEAHPERRPVIVIDNFLHKSEEKGIVYDKISDWASALVQANIAHVIFLTTDTSYSKPLSKALPDRVFHQITLGDLTPEVAKHFVVSQLETDEDADEKKNGASPAISERKLRRDLQELDECIDALGGRLTDLQVLARRLKVGQSPKKAVSDIIDQSASEILRMFLLTNKGAGSGDKKWSTEQAWYLIKQIASKESLRYNEVLLSDTFASSTTADASNAEAALESLANAELVTIKSHHGRPATIRAGKPVYQAAFNRLLDDAVVNARMDLAVLTELAKIEAKKIDKAEGELSVLGSLPSQPYQTADRVNYLLAKLQGSQEKIVAYEKEMAGLKKVLSEEA</sequence>
<protein>
    <recommendedName>
        <fullName>Mitochondrial escape protein 2</fullName>
    </recommendedName>
</protein>
<gene>
    <name type="primary">YME2</name>
    <name type="ORF">CHGG_08264</name>
</gene>
<comment type="function">
    <text evidence="1">Plays a role in maintaining the mitochondrial genome and in controlling the mtDNA escape. Involved in the regulation of mtDNA nucleotide structure and number. May have a dispensable role in early maturation of pre-rRNA (By similarity).</text>
</comment>
<comment type="subcellular location">
    <subcellularLocation>
        <location evidence="1">Mitochondrion inner membrane</location>
        <topology evidence="1">Single-pass membrane protein</topology>
    </subcellularLocation>
</comment>
<comment type="similarity">
    <text evidence="4">Belongs to the YME2 family.</text>
</comment>
<proteinExistence type="inferred from homology"/>
<reference key="1">
    <citation type="journal article" date="2015" name="Genome Announc.">
        <title>Draft genome sequence of the cellulolytic fungus Chaetomium globosum.</title>
        <authorList>
            <person name="Cuomo C.A."/>
            <person name="Untereiner W.A."/>
            <person name="Ma L.-J."/>
            <person name="Grabherr M."/>
            <person name="Birren B.W."/>
        </authorList>
    </citation>
    <scope>NUCLEOTIDE SEQUENCE [LARGE SCALE GENOMIC DNA]</scope>
    <source>
        <strain>ATCC 6205 / CBS 148.51 / DSM 1962 / NBRC 6347 / NRRL 1970</strain>
    </source>
</reference>
<name>YME2_CHAGB</name>